<reference key="1">
    <citation type="journal article" date="2009" name="Toxicon">
        <title>Nerve growth factor from Vipera lebetina venom.</title>
        <authorList>
            <person name="Paalme V."/>
            <person name="Trummal K."/>
            <person name="Samel M."/>
            <person name="Tonismagi K."/>
            <person name="Jarvekulg L."/>
            <person name="Vija H."/>
            <person name="Subbi J."/>
            <person name="Siigur J."/>
            <person name="Siigur E."/>
        </authorList>
    </citation>
    <scope>NUCLEOTIDE SEQUENCE [MRNA]</scope>
    <scope>IDENTIFICATION BY MASS SPECTROMETRY</scope>
    <scope>FUNCTION</scope>
    <scope>SUBUNIT</scope>
    <scope>SUBCELLULAR LOCATION</scope>
    <scope>TISSUE SPECIFICITY</scope>
    <scope>PROTEOLYTIC PROCESSING OF N-TERMINUS</scope>
    <scope>GLYCOSYLATION</scope>
    <source>
        <tissue>Venom</tissue>
        <tissue>Venom gland</tissue>
    </source>
</reference>
<reference key="2">
    <citation type="journal article" date="1991" name="Neuron">
        <title>Evolutionary studies of the nerve growth factor family reveal a novel member abundantly expressed in Xenopus ovary.</title>
        <authorList>
            <person name="Hallboeoek F."/>
            <person name="Ibanez C.F."/>
            <person name="Persson H."/>
        </authorList>
    </citation>
    <scope>NUCLEOTIDE SEQUENCE [GENOMIC DNA] OF 181-222</scope>
</reference>
<reference key="3">
    <citation type="journal article" date="1985" name="Comp. Biochem. Physiol.">
        <title>Isolation and characterization of nerve growth factor from Vipera lebetina (snake) venom.</title>
        <authorList>
            <person name="Siigur E."/>
            <person name="Neuman T."/>
            <person name="Jarve V."/>
            <person name="Tara A."/>
            <person name="Siigur J."/>
        </authorList>
    </citation>
    <scope>CHARACTERIZATION</scope>
    <scope>GLYCOSYLATION</scope>
    <source>
        <tissue>Venom</tissue>
    </source>
</reference>
<reference key="4">
    <citation type="journal article" date="2011" name="Toxicon">
        <title>Molecular diversity of snake venom nerve growth factors.</title>
        <authorList>
            <person name="Trummal K."/>
            <person name="Tonismagi K."/>
            <person name="Paalme V."/>
            <person name="Jarvekulg L."/>
            <person name="Siigur J."/>
            <person name="Siigur E."/>
        </authorList>
    </citation>
    <scope>CHARACTERIZATION</scope>
    <source>
        <tissue>Venom</tissue>
    </source>
</reference>
<feature type="signal peptide" evidence="4">
    <location>
        <begin position="1"/>
        <end position="18"/>
    </location>
</feature>
<feature type="propeptide" id="PRO_0000019615" evidence="1">
    <location>
        <begin position="19"/>
        <end position="125"/>
    </location>
</feature>
<feature type="chain" id="PRO_0000019616" description="Venom nerve growth factor">
    <location>
        <begin position="126"/>
        <end position="244"/>
    </location>
</feature>
<feature type="chain" id="PRO_0000397243" description="Truncated venom nerve growth factor">
    <location>
        <begin position="128"/>
        <end position="244"/>
    </location>
</feature>
<feature type="glycosylation site" description="N-linked (GlcNAc...) asparagine" evidence="7">
    <location>
        <position position="148"/>
    </location>
</feature>
<feature type="disulfide bond" evidence="2">
    <location>
        <begin position="139"/>
        <end position="204"/>
    </location>
</feature>
<feature type="disulfide bond" evidence="2">
    <location>
        <begin position="182"/>
        <end position="232"/>
    </location>
</feature>
<feature type="disulfide bond" evidence="2">
    <location>
        <begin position="192"/>
        <end position="234"/>
    </location>
</feature>
<feature type="sequence conflict" description="In Ref. 2; no nucleotide entry." evidence="7" ref="2">
    <original>S</original>
    <variation>G</variation>
    <location>
        <position position="190"/>
    </location>
</feature>
<organism>
    <name type="scientific">Macrovipera lebetinus</name>
    <name type="common">Levantine viper</name>
    <name type="synonym">Vipera lebetina</name>
    <dbReference type="NCBI Taxonomy" id="3148341"/>
    <lineage>
        <taxon>Eukaryota</taxon>
        <taxon>Metazoa</taxon>
        <taxon>Chordata</taxon>
        <taxon>Craniata</taxon>
        <taxon>Vertebrata</taxon>
        <taxon>Euteleostomi</taxon>
        <taxon>Lepidosauria</taxon>
        <taxon>Squamata</taxon>
        <taxon>Bifurcata</taxon>
        <taxon>Unidentata</taxon>
        <taxon>Episquamata</taxon>
        <taxon>Toxicofera</taxon>
        <taxon>Serpentes</taxon>
        <taxon>Colubroidea</taxon>
        <taxon>Viperidae</taxon>
        <taxon>Viperinae</taxon>
        <taxon>Macrovipera</taxon>
    </lineage>
</organism>
<accession>P25428</accession>
<accession>Q5S8C5</accession>
<name>NGFV_MACLB</name>
<dbReference type="EMBL" id="AY740013">
    <property type="protein sequence ID" value="AAV64846.1"/>
    <property type="molecule type" value="mRNA"/>
</dbReference>
<dbReference type="SMR" id="P25428"/>
<dbReference type="GO" id="GO:0030424">
    <property type="term" value="C:axon"/>
    <property type="evidence" value="ECO:0007669"/>
    <property type="project" value="TreeGrafter"/>
</dbReference>
<dbReference type="GO" id="GO:0030425">
    <property type="term" value="C:dendrite"/>
    <property type="evidence" value="ECO:0007669"/>
    <property type="project" value="TreeGrafter"/>
</dbReference>
<dbReference type="GO" id="GO:0005576">
    <property type="term" value="C:extracellular region"/>
    <property type="evidence" value="ECO:0000314"/>
    <property type="project" value="UniProtKB"/>
</dbReference>
<dbReference type="GO" id="GO:0005615">
    <property type="term" value="C:extracellular space"/>
    <property type="evidence" value="ECO:0007669"/>
    <property type="project" value="TreeGrafter"/>
</dbReference>
<dbReference type="GO" id="GO:0008021">
    <property type="term" value="C:synaptic vesicle"/>
    <property type="evidence" value="ECO:0007669"/>
    <property type="project" value="TreeGrafter"/>
</dbReference>
<dbReference type="GO" id="GO:0008083">
    <property type="term" value="F:growth factor activity"/>
    <property type="evidence" value="ECO:0000314"/>
    <property type="project" value="UniProtKB"/>
</dbReference>
<dbReference type="GO" id="GO:0008289">
    <property type="term" value="F:lipid binding"/>
    <property type="evidence" value="ECO:0007669"/>
    <property type="project" value="UniProtKB-KW"/>
</dbReference>
<dbReference type="GO" id="GO:0008191">
    <property type="term" value="F:metalloendopeptidase inhibitor activity"/>
    <property type="evidence" value="ECO:0000250"/>
    <property type="project" value="UniProtKB"/>
</dbReference>
<dbReference type="GO" id="GO:0005163">
    <property type="term" value="F:nerve growth factor receptor binding"/>
    <property type="evidence" value="ECO:0007669"/>
    <property type="project" value="TreeGrafter"/>
</dbReference>
<dbReference type="GO" id="GO:0090729">
    <property type="term" value="F:toxin activity"/>
    <property type="evidence" value="ECO:0007669"/>
    <property type="project" value="UniProtKB-KW"/>
</dbReference>
<dbReference type="GO" id="GO:0007169">
    <property type="term" value="P:cell surface receptor protein tyrosine kinase signaling pathway"/>
    <property type="evidence" value="ECO:0007669"/>
    <property type="project" value="TreeGrafter"/>
</dbReference>
<dbReference type="GO" id="GO:0050804">
    <property type="term" value="P:modulation of chemical synaptic transmission"/>
    <property type="evidence" value="ECO:0007669"/>
    <property type="project" value="TreeGrafter"/>
</dbReference>
<dbReference type="GO" id="GO:0043524">
    <property type="term" value="P:negative regulation of neuron apoptotic process"/>
    <property type="evidence" value="ECO:0007669"/>
    <property type="project" value="TreeGrafter"/>
</dbReference>
<dbReference type="GO" id="GO:0021675">
    <property type="term" value="P:nerve development"/>
    <property type="evidence" value="ECO:0007669"/>
    <property type="project" value="TreeGrafter"/>
</dbReference>
<dbReference type="GO" id="GO:0038180">
    <property type="term" value="P:nerve growth factor signaling pathway"/>
    <property type="evidence" value="ECO:0007669"/>
    <property type="project" value="TreeGrafter"/>
</dbReference>
<dbReference type="GO" id="GO:0048812">
    <property type="term" value="P:neuron projection morphogenesis"/>
    <property type="evidence" value="ECO:0007669"/>
    <property type="project" value="TreeGrafter"/>
</dbReference>
<dbReference type="FunFam" id="2.10.90.10:FF:000002">
    <property type="entry name" value="Brain-derived neurotrophic factor"/>
    <property type="match status" value="1"/>
</dbReference>
<dbReference type="Gene3D" id="2.10.90.10">
    <property type="entry name" value="Cystine-knot cytokines"/>
    <property type="match status" value="1"/>
</dbReference>
<dbReference type="InterPro" id="IPR029034">
    <property type="entry name" value="Cystine-knot_cytokine"/>
</dbReference>
<dbReference type="InterPro" id="IPR020408">
    <property type="entry name" value="Nerve_growth_factor-like"/>
</dbReference>
<dbReference type="InterPro" id="IPR002072">
    <property type="entry name" value="Nerve_growth_factor-rel"/>
</dbReference>
<dbReference type="InterPro" id="IPR020425">
    <property type="entry name" value="Nerve_growth_factor_bsu"/>
</dbReference>
<dbReference type="InterPro" id="IPR019846">
    <property type="entry name" value="Nerve_growth_factor_CS"/>
</dbReference>
<dbReference type="InterPro" id="IPR020433">
    <property type="entry name" value="Venom_nerve_growth_factor"/>
</dbReference>
<dbReference type="PANTHER" id="PTHR11589:SF10">
    <property type="entry name" value="BETA-NERVE GROWTH FACTOR"/>
    <property type="match status" value="1"/>
</dbReference>
<dbReference type="PANTHER" id="PTHR11589">
    <property type="entry name" value="NERVE GROWTH FACTOR NGF -RELATED"/>
    <property type="match status" value="1"/>
</dbReference>
<dbReference type="Pfam" id="PF00243">
    <property type="entry name" value="NGF"/>
    <property type="match status" value="1"/>
</dbReference>
<dbReference type="PIRSF" id="PIRSF001789">
    <property type="entry name" value="NGF"/>
    <property type="match status" value="1"/>
</dbReference>
<dbReference type="PRINTS" id="PR00268">
    <property type="entry name" value="NGF"/>
</dbReference>
<dbReference type="PRINTS" id="PR01913">
    <property type="entry name" value="NGFBETA"/>
</dbReference>
<dbReference type="PRINTS" id="PR01917">
    <property type="entry name" value="VENOMNGF"/>
</dbReference>
<dbReference type="SMART" id="SM00140">
    <property type="entry name" value="NGF"/>
    <property type="match status" value="1"/>
</dbReference>
<dbReference type="SUPFAM" id="SSF57501">
    <property type="entry name" value="Cystine-knot cytokines"/>
    <property type="match status" value="1"/>
</dbReference>
<dbReference type="PROSITE" id="PS00248">
    <property type="entry name" value="NGF_1"/>
    <property type="match status" value="1"/>
</dbReference>
<dbReference type="PROSITE" id="PS50270">
    <property type="entry name" value="NGF_2"/>
    <property type="match status" value="1"/>
</dbReference>
<keyword id="KW-0165">Cleavage on pair of basic residues</keyword>
<keyword id="KW-1015">Disulfide bond</keyword>
<keyword id="KW-0325">Glycoprotein</keyword>
<keyword id="KW-0339">Growth factor</keyword>
<keyword id="KW-0446">Lipid-binding</keyword>
<keyword id="KW-0481">Metalloenzyme inhibitor</keyword>
<keyword id="KW-0483">Metalloprotease inhibitor</keyword>
<keyword id="KW-0646">Protease inhibitor</keyword>
<keyword id="KW-0964">Secreted</keyword>
<keyword id="KW-0732">Signal</keyword>
<keyword id="KW-0800">Toxin</keyword>
<comment type="function">
    <text evidence="2 3 5">Nerve growth factor is important for the development and maintenance of the sympathetic and sensory nervous systems. It stimulates division and differentiation of sympathetic and embryonic sensory neurons as well as basal forebrain cholinergic neurons in the brain. Its relevance in the snake venom is not clear. However, it has been shown to inhibit metalloproteinase-dependent proteolysis of platelet glycoprotein Ib alpha, suggesting a metalloproteinase inhibition to prevent metalloprotease autodigestion and/or protection against prey proteases (By similarity). Binds a lipid between the two protein chains in the homodimer. The lipid-bound form promotes histamine relase from mouse mast cells, contrary to the lipid-free form (By similarity). It promotes neurite outgrowth in rat PC12 pheochromocytoma cells (PubMed:19463841).</text>
</comment>
<comment type="subunit">
    <text evidence="5">Homodimer; non-covalently linked.</text>
</comment>
<comment type="subcellular location">
    <subcellularLocation>
        <location evidence="5">Secreted</location>
    </subcellularLocation>
</comment>
<comment type="tissue specificity">
    <text evidence="5">Expressed by the venom gland.</text>
</comment>
<comment type="PTM">
    <text evidence="5 6">N-glycosylated.</text>
</comment>
<comment type="mass spectrometry" mass="14380.0" method="MALDI" evidence="5">
    <molecule>Venom nerve growth factor</molecule>
</comment>
<comment type="miscellaneous">
    <text>On the 2D-gel the determined MW of this protein is: 17.5 kDa.</text>
</comment>
<comment type="similarity">
    <text evidence="7">Belongs to the NGF-beta family.</text>
</comment>
<evidence type="ECO:0000250" key="1"/>
<evidence type="ECO:0000250" key="2">
    <source>
        <dbReference type="UniProtKB" id="P61898"/>
    </source>
</evidence>
<evidence type="ECO:0000250" key="3">
    <source>
        <dbReference type="UniProtKB" id="P61899"/>
    </source>
</evidence>
<evidence type="ECO:0000255" key="4"/>
<evidence type="ECO:0000269" key="5">
    <source>
    </source>
</evidence>
<evidence type="ECO:0000269" key="6">
    <source>
    </source>
</evidence>
<evidence type="ECO:0000305" key="7"/>
<protein>
    <recommendedName>
        <fullName>Venom nerve growth factor</fullName>
        <shortName>v-NGF</shortName>
        <shortName>vNGF</shortName>
    </recommendedName>
    <component>
        <recommendedName>
            <fullName>Truncated venom nerve growth factor</fullName>
        </recommendedName>
    </component>
</protein>
<proteinExistence type="evidence at protein level"/>
<sequence length="244" mass="27318">MSMLCYTLIIAFLIGIWAAPKSEDNVSLGSPATPDLSDTSCAKTHEALKTSRNTDQHYPAPKKAEDQEFGSAANIIVDPKLFQKRRFQSPRVLFSTQPPPLSRDEQSVEFLDNADSLNRNIRAKRATHPVHNRGEFSVCDSVSVWVANKTTATDIRGNVVTVMVDVKLNNNVYRQYFFETKCKNPSPVSSGCRGIDAKHWNSYCTTTDTFVRALTMEGNQASWRFIRIDTACVCVISRKNDNFG</sequence>